<reference key="1">
    <citation type="submission" date="2006-08" db="EMBL/GenBank/DDBJ databases">
        <title>Complete sequence of Shewanella frigidimarina NCIMB 400.</title>
        <authorList>
            <consortium name="US DOE Joint Genome Institute"/>
            <person name="Copeland A."/>
            <person name="Lucas S."/>
            <person name="Lapidus A."/>
            <person name="Barry K."/>
            <person name="Detter J.C."/>
            <person name="Glavina del Rio T."/>
            <person name="Hammon N."/>
            <person name="Israni S."/>
            <person name="Dalin E."/>
            <person name="Tice H."/>
            <person name="Pitluck S."/>
            <person name="Fredrickson J.K."/>
            <person name="Kolker E."/>
            <person name="McCuel L.A."/>
            <person name="DiChristina T."/>
            <person name="Nealson K.H."/>
            <person name="Newman D."/>
            <person name="Tiedje J.M."/>
            <person name="Zhou J."/>
            <person name="Romine M.F."/>
            <person name="Culley D.E."/>
            <person name="Serres M."/>
            <person name="Chertkov O."/>
            <person name="Brettin T."/>
            <person name="Bruce D."/>
            <person name="Han C."/>
            <person name="Tapia R."/>
            <person name="Gilna P."/>
            <person name="Schmutz J."/>
            <person name="Larimer F."/>
            <person name="Land M."/>
            <person name="Hauser L."/>
            <person name="Kyrpides N."/>
            <person name="Mikhailova N."/>
            <person name="Richardson P."/>
        </authorList>
    </citation>
    <scope>NUCLEOTIDE SEQUENCE [LARGE SCALE GENOMIC DNA]</scope>
    <source>
        <strain>NCIMB 400</strain>
    </source>
</reference>
<gene>
    <name evidence="1" type="primary">miaB</name>
    <name type="ordered locus">Sfri_0713</name>
</gene>
<keyword id="KW-0004">4Fe-4S</keyword>
<keyword id="KW-0963">Cytoplasm</keyword>
<keyword id="KW-0408">Iron</keyword>
<keyword id="KW-0411">Iron-sulfur</keyword>
<keyword id="KW-0479">Metal-binding</keyword>
<keyword id="KW-1185">Reference proteome</keyword>
<keyword id="KW-0949">S-adenosyl-L-methionine</keyword>
<keyword id="KW-0808">Transferase</keyword>
<keyword id="KW-0819">tRNA processing</keyword>
<accession>Q087J4</accession>
<organism>
    <name type="scientific">Shewanella frigidimarina (strain NCIMB 400)</name>
    <dbReference type="NCBI Taxonomy" id="318167"/>
    <lineage>
        <taxon>Bacteria</taxon>
        <taxon>Pseudomonadati</taxon>
        <taxon>Pseudomonadota</taxon>
        <taxon>Gammaproteobacteria</taxon>
        <taxon>Alteromonadales</taxon>
        <taxon>Shewanellaceae</taxon>
        <taxon>Shewanella</taxon>
    </lineage>
</organism>
<evidence type="ECO:0000255" key="1">
    <source>
        <dbReference type="HAMAP-Rule" id="MF_01864"/>
    </source>
</evidence>
<evidence type="ECO:0000255" key="2">
    <source>
        <dbReference type="PROSITE-ProRule" id="PRU01266"/>
    </source>
</evidence>
<comment type="function">
    <text evidence="1">Catalyzes the methylthiolation of N6-(dimethylallyl)adenosine (i(6)A), leading to the formation of 2-methylthio-N6-(dimethylallyl)adenosine (ms(2)i(6)A) at position 37 in tRNAs that read codons beginning with uridine.</text>
</comment>
<comment type="catalytic activity">
    <reaction evidence="1">
        <text>N(6)-dimethylallyladenosine(37) in tRNA + (sulfur carrier)-SH + AH2 + 2 S-adenosyl-L-methionine = 2-methylsulfanyl-N(6)-dimethylallyladenosine(37) in tRNA + (sulfur carrier)-H + 5'-deoxyadenosine + L-methionine + A + S-adenosyl-L-homocysteine + 2 H(+)</text>
        <dbReference type="Rhea" id="RHEA:37067"/>
        <dbReference type="Rhea" id="RHEA-COMP:10375"/>
        <dbReference type="Rhea" id="RHEA-COMP:10376"/>
        <dbReference type="Rhea" id="RHEA-COMP:14737"/>
        <dbReference type="Rhea" id="RHEA-COMP:14739"/>
        <dbReference type="ChEBI" id="CHEBI:13193"/>
        <dbReference type="ChEBI" id="CHEBI:15378"/>
        <dbReference type="ChEBI" id="CHEBI:17319"/>
        <dbReference type="ChEBI" id="CHEBI:17499"/>
        <dbReference type="ChEBI" id="CHEBI:29917"/>
        <dbReference type="ChEBI" id="CHEBI:57844"/>
        <dbReference type="ChEBI" id="CHEBI:57856"/>
        <dbReference type="ChEBI" id="CHEBI:59789"/>
        <dbReference type="ChEBI" id="CHEBI:64428"/>
        <dbReference type="ChEBI" id="CHEBI:74415"/>
        <dbReference type="ChEBI" id="CHEBI:74417"/>
        <dbReference type="EC" id="2.8.4.3"/>
    </reaction>
</comment>
<comment type="cofactor">
    <cofactor evidence="1">
        <name>[4Fe-4S] cluster</name>
        <dbReference type="ChEBI" id="CHEBI:49883"/>
    </cofactor>
    <text evidence="1">Binds 2 [4Fe-4S] clusters. One cluster is coordinated with 3 cysteines and an exchangeable S-adenosyl-L-methionine.</text>
</comment>
<comment type="subunit">
    <text evidence="1">Monomer.</text>
</comment>
<comment type="subcellular location">
    <subcellularLocation>
        <location evidence="1">Cytoplasm</location>
    </subcellularLocation>
</comment>
<comment type="similarity">
    <text evidence="1">Belongs to the methylthiotransferase family. MiaB subfamily.</text>
</comment>
<protein>
    <recommendedName>
        <fullName evidence="1">tRNA-2-methylthio-N(6)-dimethylallyladenosine synthase</fullName>
        <ecNumber evidence="1">2.8.4.3</ecNumber>
    </recommendedName>
    <alternativeName>
        <fullName evidence="1">(Dimethylallyl)adenosine tRNA methylthiotransferase MiaB</fullName>
    </alternativeName>
    <alternativeName>
        <fullName evidence="1">tRNA-i(6)A37 methylthiotransferase</fullName>
    </alternativeName>
</protein>
<sequence length="474" mass="53564">MSKKLHIKTWGCQMNEYDSSKMADLLDDYQGYTLTEDASEADVLLLNTCSIREKAQEKVFHQLGRWKSLKDKNPNLIIGVGGCVASQEGKAIKDRAQCVDIIFGPQTLHRLPEMIEQIQRGEKAVIDISFPEIEKFDRLPEPRADGPTAFVSIMEGCSKYCSFCVVPYTRGEEVSRPLDDVILEVAQLAAQGVREVNLLGQNVNAYRGATHDDEICTFAELLRLVASIDGIDRLRFTTSHPIEFTQDIIDVYEDTPELVSFLHLPVQSGSDRILTQMKRGHMAIEYKSIIRRLRKARPDIQISSDFIIGFPGESKDDFADTMKLIEDVAFDHSFSFIYSARPGTPAADLPDDVSDEEKKQRLAILQDRITQQAMRYSRQMLGTVQRILVEGPSVKNPMELRGRTENSRVVNFEAAHTHIGSFVDVKIVDVYTNSLRGEFVRGENEMDLRRSLRPAEILAKHKQDDALGVTHFKP</sequence>
<dbReference type="EC" id="2.8.4.3" evidence="1"/>
<dbReference type="EMBL" id="CP000447">
    <property type="protein sequence ID" value="ABI70571.1"/>
    <property type="molecule type" value="Genomic_DNA"/>
</dbReference>
<dbReference type="RefSeq" id="WP_011636196.1">
    <property type="nucleotide sequence ID" value="NC_008345.1"/>
</dbReference>
<dbReference type="SMR" id="Q087J4"/>
<dbReference type="STRING" id="318167.Sfri_0713"/>
<dbReference type="KEGG" id="sfr:Sfri_0713"/>
<dbReference type="eggNOG" id="COG0621">
    <property type="taxonomic scope" value="Bacteria"/>
</dbReference>
<dbReference type="HOGENOM" id="CLU_018697_2_0_6"/>
<dbReference type="OrthoDB" id="9805215at2"/>
<dbReference type="Proteomes" id="UP000000684">
    <property type="component" value="Chromosome"/>
</dbReference>
<dbReference type="GO" id="GO:0005829">
    <property type="term" value="C:cytosol"/>
    <property type="evidence" value="ECO:0007669"/>
    <property type="project" value="TreeGrafter"/>
</dbReference>
<dbReference type="GO" id="GO:0051539">
    <property type="term" value="F:4 iron, 4 sulfur cluster binding"/>
    <property type="evidence" value="ECO:0007669"/>
    <property type="project" value="UniProtKB-UniRule"/>
</dbReference>
<dbReference type="GO" id="GO:0046872">
    <property type="term" value="F:metal ion binding"/>
    <property type="evidence" value="ECO:0007669"/>
    <property type="project" value="UniProtKB-KW"/>
</dbReference>
<dbReference type="GO" id="GO:0035597">
    <property type="term" value="F:N6-isopentenyladenosine methylthiotransferase activity"/>
    <property type="evidence" value="ECO:0007669"/>
    <property type="project" value="TreeGrafter"/>
</dbReference>
<dbReference type="CDD" id="cd01335">
    <property type="entry name" value="Radical_SAM"/>
    <property type="match status" value="1"/>
</dbReference>
<dbReference type="FunFam" id="3.40.50.12160:FF:000001">
    <property type="entry name" value="tRNA-2-methylthio-N(6)-dimethylallyladenosine synthase"/>
    <property type="match status" value="1"/>
</dbReference>
<dbReference type="FunFam" id="3.80.30.20:FF:000001">
    <property type="entry name" value="tRNA-2-methylthio-N(6)-dimethylallyladenosine synthase 2"/>
    <property type="match status" value="1"/>
</dbReference>
<dbReference type="Gene3D" id="3.40.50.12160">
    <property type="entry name" value="Methylthiotransferase, N-terminal domain"/>
    <property type="match status" value="1"/>
</dbReference>
<dbReference type="Gene3D" id="3.80.30.20">
    <property type="entry name" value="tm_1862 like domain"/>
    <property type="match status" value="1"/>
</dbReference>
<dbReference type="HAMAP" id="MF_01864">
    <property type="entry name" value="tRNA_metthiotr_MiaB"/>
    <property type="match status" value="1"/>
</dbReference>
<dbReference type="InterPro" id="IPR006638">
    <property type="entry name" value="Elp3/MiaA/NifB-like_rSAM"/>
</dbReference>
<dbReference type="InterPro" id="IPR005839">
    <property type="entry name" value="Methylthiotransferase"/>
</dbReference>
<dbReference type="InterPro" id="IPR020612">
    <property type="entry name" value="Methylthiotransferase_CS"/>
</dbReference>
<dbReference type="InterPro" id="IPR013848">
    <property type="entry name" value="Methylthiotransferase_N"/>
</dbReference>
<dbReference type="InterPro" id="IPR038135">
    <property type="entry name" value="Methylthiotransferase_N_sf"/>
</dbReference>
<dbReference type="InterPro" id="IPR006463">
    <property type="entry name" value="MiaB_methiolase"/>
</dbReference>
<dbReference type="InterPro" id="IPR007197">
    <property type="entry name" value="rSAM"/>
</dbReference>
<dbReference type="InterPro" id="IPR023404">
    <property type="entry name" value="rSAM_horseshoe"/>
</dbReference>
<dbReference type="InterPro" id="IPR002792">
    <property type="entry name" value="TRAM_dom"/>
</dbReference>
<dbReference type="NCBIfam" id="TIGR01574">
    <property type="entry name" value="miaB-methiolase"/>
    <property type="match status" value="1"/>
</dbReference>
<dbReference type="NCBIfam" id="TIGR00089">
    <property type="entry name" value="MiaB/RimO family radical SAM methylthiotransferase"/>
    <property type="match status" value="1"/>
</dbReference>
<dbReference type="PANTHER" id="PTHR43020">
    <property type="entry name" value="CDK5 REGULATORY SUBUNIT-ASSOCIATED PROTEIN 1"/>
    <property type="match status" value="1"/>
</dbReference>
<dbReference type="PANTHER" id="PTHR43020:SF2">
    <property type="entry name" value="MITOCHONDRIAL TRNA METHYLTHIOTRANSFERASE CDK5RAP1"/>
    <property type="match status" value="1"/>
</dbReference>
<dbReference type="Pfam" id="PF04055">
    <property type="entry name" value="Radical_SAM"/>
    <property type="match status" value="1"/>
</dbReference>
<dbReference type="Pfam" id="PF01938">
    <property type="entry name" value="TRAM"/>
    <property type="match status" value="1"/>
</dbReference>
<dbReference type="Pfam" id="PF00919">
    <property type="entry name" value="UPF0004"/>
    <property type="match status" value="1"/>
</dbReference>
<dbReference type="SFLD" id="SFLDF00273">
    <property type="entry name" value="(dimethylallyl)adenosine_tRNA"/>
    <property type="match status" value="1"/>
</dbReference>
<dbReference type="SFLD" id="SFLDG01082">
    <property type="entry name" value="B12-binding_domain_containing"/>
    <property type="match status" value="1"/>
</dbReference>
<dbReference type="SFLD" id="SFLDS00029">
    <property type="entry name" value="Radical_SAM"/>
    <property type="match status" value="1"/>
</dbReference>
<dbReference type="SMART" id="SM00729">
    <property type="entry name" value="Elp3"/>
    <property type="match status" value="1"/>
</dbReference>
<dbReference type="SUPFAM" id="SSF102114">
    <property type="entry name" value="Radical SAM enzymes"/>
    <property type="match status" value="1"/>
</dbReference>
<dbReference type="PROSITE" id="PS51449">
    <property type="entry name" value="MTTASE_N"/>
    <property type="match status" value="1"/>
</dbReference>
<dbReference type="PROSITE" id="PS01278">
    <property type="entry name" value="MTTASE_RADICAL"/>
    <property type="match status" value="1"/>
</dbReference>
<dbReference type="PROSITE" id="PS51918">
    <property type="entry name" value="RADICAL_SAM"/>
    <property type="match status" value="1"/>
</dbReference>
<dbReference type="PROSITE" id="PS50926">
    <property type="entry name" value="TRAM"/>
    <property type="match status" value="1"/>
</dbReference>
<feature type="chain" id="PRO_0000374538" description="tRNA-2-methylthio-N(6)-dimethylallyladenosine synthase">
    <location>
        <begin position="1"/>
        <end position="474"/>
    </location>
</feature>
<feature type="domain" description="MTTase N-terminal" evidence="1">
    <location>
        <begin position="3"/>
        <end position="120"/>
    </location>
</feature>
<feature type="domain" description="Radical SAM core" evidence="2">
    <location>
        <begin position="143"/>
        <end position="375"/>
    </location>
</feature>
<feature type="domain" description="TRAM" evidence="1">
    <location>
        <begin position="378"/>
        <end position="441"/>
    </location>
</feature>
<feature type="binding site" evidence="1">
    <location>
        <position position="12"/>
    </location>
    <ligand>
        <name>[4Fe-4S] cluster</name>
        <dbReference type="ChEBI" id="CHEBI:49883"/>
        <label>1</label>
    </ligand>
</feature>
<feature type="binding site" evidence="1">
    <location>
        <position position="49"/>
    </location>
    <ligand>
        <name>[4Fe-4S] cluster</name>
        <dbReference type="ChEBI" id="CHEBI:49883"/>
        <label>1</label>
    </ligand>
</feature>
<feature type="binding site" evidence="1">
    <location>
        <position position="83"/>
    </location>
    <ligand>
        <name>[4Fe-4S] cluster</name>
        <dbReference type="ChEBI" id="CHEBI:49883"/>
        <label>1</label>
    </ligand>
</feature>
<feature type="binding site" evidence="1">
    <location>
        <position position="157"/>
    </location>
    <ligand>
        <name>[4Fe-4S] cluster</name>
        <dbReference type="ChEBI" id="CHEBI:49883"/>
        <label>2</label>
        <note>4Fe-4S-S-AdoMet</note>
    </ligand>
</feature>
<feature type="binding site" evidence="1">
    <location>
        <position position="161"/>
    </location>
    <ligand>
        <name>[4Fe-4S] cluster</name>
        <dbReference type="ChEBI" id="CHEBI:49883"/>
        <label>2</label>
        <note>4Fe-4S-S-AdoMet</note>
    </ligand>
</feature>
<feature type="binding site" evidence="1">
    <location>
        <position position="164"/>
    </location>
    <ligand>
        <name>[4Fe-4S] cluster</name>
        <dbReference type="ChEBI" id="CHEBI:49883"/>
        <label>2</label>
        <note>4Fe-4S-S-AdoMet</note>
    </ligand>
</feature>
<name>MIAB_SHEFN</name>
<proteinExistence type="inferred from homology"/>